<gene>
    <name type="primary">NCALD</name>
</gene>
<keyword id="KW-0106">Calcium</keyword>
<keyword id="KW-0449">Lipoprotein</keyword>
<keyword id="KW-0479">Metal-binding</keyword>
<keyword id="KW-0519">Myristate</keyword>
<keyword id="KW-1185">Reference proteome</keyword>
<keyword id="KW-0677">Repeat</keyword>
<organism>
    <name type="scientific">Pongo abelii</name>
    <name type="common">Sumatran orangutan</name>
    <name type="synonym">Pongo pygmaeus abelii</name>
    <dbReference type="NCBI Taxonomy" id="9601"/>
    <lineage>
        <taxon>Eukaryota</taxon>
        <taxon>Metazoa</taxon>
        <taxon>Chordata</taxon>
        <taxon>Craniata</taxon>
        <taxon>Vertebrata</taxon>
        <taxon>Euteleostomi</taxon>
        <taxon>Mammalia</taxon>
        <taxon>Eutheria</taxon>
        <taxon>Euarchontoglires</taxon>
        <taxon>Primates</taxon>
        <taxon>Haplorrhini</taxon>
        <taxon>Catarrhini</taxon>
        <taxon>Hominidae</taxon>
        <taxon>Pongo</taxon>
    </lineage>
</organism>
<proteinExistence type="evidence at transcript level"/>
<protein>
    <recommendedName>
        <fullName>Neurocalcin-delta</fullName>
    </recommendedName>
</protein>
<comment type="function">
    <text evidence="1">May be involved in the calcium-dependent regulation of rhodopsin phosphorylation. Binds three calcium ions (By similarity).</text>
</comment>
<comment type="subunit">
    <text evidence="2">Interacts with GUCY2D.</text>
</comment>
<comment type="similarity">
    <text evidence="4">Belongs to the recoverin family.</text>
</comment>
<sequence length="193" mass="22173">MGKQNSKLRPEVMQDLLESTDFTEHEIQEWYKGFLRDCPSGHLSMEEFKKIYGNFFPYGDASKFAEHVFRTFDANGDGTIDFREFIIALSVTSRGKLEQKLKWAFSMYDLDGNGYISKAEMLEIVQAIYKMVSSVMKMPEDESTPGKRTEKIFRQMDTNRDGKLSLEEFIRGAKSDPSIVRLLQCDPSSAGQF</sequence>
<accession>Q5RAH1</accession>
<evidence type="ECO:0000250" key="1"/>
<evidence type="ECO:0000250" key="2">
    <source>
        <dbReference type="UniProtKB" id="Q5PQN0"/>
    </source>
</evidence>
<evidence type="ECO:0000255" key="3">
    <source>
        <dbReference type="PROSITE-ProRule" id="PRU00448"/>
    </source>
</evidence>
<evidence type="ECO:0000305" key="4"/>
<name>NCALD_PONAB</name>
<reference key="1">
    <citation type="submission" date="2004-11" db="EMBL/GenBank/DDBJ databases">
        <authorList>
            <consortium name="The German cDNA consortium"/>
        </authorList>
    </citation>
    <scope>NUCLEOTIDE SEQUENCE [LARGE SCALE MRNA]</scope>
    <source>
        <tissue>Brain cortex</tissue>
    </source>
</reference>
<feature type="initiator methionine" description="Removed">
    <location>
        <position position="1"/>
    </location>
</feature>
<feature type="chain" id="PRO_0000249732" description="Neurocalcin-delta">
    <location>
        <begin position="2"/>
        <end position="193"/>
    </location>
</feature>
<feature type="domain" description="EF-hand 1" evidence="3">
    <location>
        <begin position="40"/>
        <end position="58"/>
    </location>
</feature>
<feature type="domain" description="EF-hand 2" evidence="3">
    <location>
        <begin position="60"/>
        <end position="95"/>
    </location>
</feature>
<feature type="domain" description="EF-hand 3" evidence="3">
    <location>
        <begin position="96"/>
        <end position="131"/>
    </location>
</feature>
<feature type="domain" description="EF-hand 4" evidence="3">
    <location>
        <begin position="144"/>
        <end position="179"/>
    </location>
</feature>
<feature type="binding site" evidence="3">
    <location>
        <position position="73"/>
    </location>
    <ligand>
        <name>Ca(2+)</name>
        <dbReference type="ChEBI" id="CHEBI:29108"/>
        <label>1</label>
    </ligand>
</feature>
<feature type="binding site" evidence="3">
    <location>
        <position position="75"/>
    </location>
    <ligand>
        <name>Ca(2+)</name>
        <dbReference type="ChEBI" id="CHEBI:29108"/>
        <label>1</label>
    </ligand>
</feature>
<feature type="binding site" evidence="3">
    <location>
        <position position="77"/>
    </location>
    <ligand>
        <name>Ca(2+)</name>
        <dbReference type="ChEBI" id="CHEBI:29108"/>
        <label>1</label>
    </ligand>
</feature>
<feature type="binding site" evidence="3">
    <location>
        <position position="79"/>
    </location>
    <ligand>
        <name>Ca(2+)</name>
        <dbReference type="ChEBI" id="CHEBI:29108"/>
        <label>1</label>
    </ligand>
</feature>
<feature type="binding site" evidence="3">
    <location>
        <position position="84"/>
    </location>
    <ligand>
        <name>Ca(2+)</name>
        <dbReference type="ChEBI" id="CHEBI:29108"/>
        <label>1</label>
    </ligand>
</feature>
<feature type="binding site" evidence="3">
    <location>
        <position position="109"/>
    </location>
    <ligand>
        <name>Ca(2+)</name>
        <dbReference type="ChEBI" id="CHEBI:29108"/>
        <label>2</label>
    </ligand>
</feature>
<feature type="binding site" evidence="3">
    <location>
        <position position="111"/>
    </location>
    <ligand>
        <name>Ca(2+)</name>
        <dbReference type="ChEBI" id="CHEBI:29108"/>
        <label>2</label>
    </ligand>
</feature>
<feature type="binding site" evidence="3">
    <location>
        <position position="113"/>
    </location>
    <ligand>
        <name>Ca(2+)</name>
        <dbReference type="ChEBI" id="CHEBI:29108"/>
        <label>2</label>
    </ligand>
</feature>
<feature type="binding site" evidence="3">
    <location>
        <position position="115"/>
    </location>
    <ligand>
        <name>Ca(2+)</name>
        <dbReference type="ChEBI" id="CHEBI:29108"/>
        <label>2</label>
    </ligand>
</feature>
<feature type="binding site" evidence="3">
    <location>
        <position position="120"/>
    </location>
    <ligand>
        <name>Ca(2+)</name>
        <dbReference type="ChEBI" id="CHEBI:29108"/>
        <label>2</label>
    </ligand>
</feature>
<feature type="binding site" evidence="3">
    <location>
        <position position="157"/>
    </location>
    <ligand>
        <name>Ca(2+)</name>
        <dbReference type="ChEBI" id="CHEBI:29108"/>
        <label>3</label>
    </ligand>
</feature>
<feature type="binding site" evidence="3">
    <location>
        <position position="159"/>
    </location>
    <ligand>
        <name>Ca(2+)</name>
        <dbReference type="ChEBI" id="CHEBI:29108"/>
        <label>3</label>
    </ligand>
</feature>
<feature type="binding site" evidence="3">
    <location>
        <position position="161"/>
    </location>
    <ligand>
        <name>Ca(2+)</name>
        <dbReference type="ChEBI" id="CHEBI:29108"/>
        <label>3</label>
    </ligand>
</feature>
<feature type="binding site" evidence="3">
    <location>
        <position position="163"/>
    </location>
    <ligand>
        <name>Ca(2+)</name>
        <dbReference type="ChEBI" id="CHEBI:29108"/>
        <label>3</label>
    </ligand>
</feature>
<feature type="binding site" evidence="3">
    <location>
        <position position="168"/>
    </location>
    <ligand>
        <name>Ca(2+)</name>
        <dbReference type="ChEBI" id="CHEBI:29108"/>
        <label>3</label>
    </ligand>
</feature>
<feature type="lipid moiety-binding region" description="N-myristoyl glycine" evidence="1">
    <location>
        <position position="2"/>
    </location>
</feature>
<dbReference type="EMBL" id="CR859045">
    <property type="protein sequence ID" value="CAH91239.1"/>
    <property type="molecule type" value="mRNA"/>
</dbReference>
<dbReference type="RefSeq" id="NP_001125732.1">
    <property type="nucleotide sequence ID" value="NM_001132260.1"/>
</dbReference>
<dbReference type="SMR" id="Q5RAH1"/>
<dbReference type="STRING" id="9601.ENSPPYP00000021082"/>
<dbReference type="GeneID" id="100172657"/>
<dbReference type="KEGG" id="pon:100172657"/>
<dbReference type="CTD" id="83988"/>
<dbReference type="eggNOG" id="KOG0044">
    <property type="taxonomic scope" value="Eukaryota"/>
</dbReference>
<dbReference type="InParanoid" id="Q5RAH1"/>
<dbReference type="OrthoDB" id="191686at2759"/>
<dbReference type="Proteomes" id="UP000001595">
    <property type="component" value="Unplaced"/>
</dbReference>
<dbReference type="GO" id="GO:0003779">
    <property type="term" value="F:actin binding"/>
    <property type="evidence" value="ECO:0007669"/>
    <property type="project" value="TreeGrafter"/>
</dbReference>
<dbReference type="GO" id="GO:0005509">
    <property type="term" value="F:calcium ion binding"/>
    <property type="evidence" value="ECO:0007669"/>
    <property type="project" value="InterPro"/>
</dbReference>
<dbReference type="GO" id="GO:0015631">
    <property type="term" value="F:tubulin binding"/>
    <property type="evidence" value="ECO:0007669"/>
    <property type="project" value="TreeGrafter"/>
</dbReference>
<dbReference type="GO" id="GO:0019722">
    <property type="term" value="P:calcium-mediated signaling"/>
    <property type="evidence" value="ECO:0007669"/>
    <property type="project" value="TreeGrafter"/>
</dbReference>
<dbReference type="CDD" id="cd00051">
    <property type="entry name" value="EFh"/>
    <property type="match status" value="2"/>
</dbReference>
<dbReference type="FunFam" id="1.10.238.10:FF:000009">
    <property type="entry name" value="Visinin-like protein 1"/>
    <property type="match status" value="1"/>
</dbReference>
<dbReference type="Gene3D" id="1.10.238.10">
    <property type="entry name" value="EF-hand"/>
    <property type="match status" value="1"/>
</dbReference>
<dbReference type="InterPro" id="IPR011992">
    <property type="entry name" value="EF-hand-dom_pair"/>
</dbReference>
<dbReference type="InterPro" id="IPR018247">
    <property type="entry name" value="EF_Hand_1_Ca_BS"/>
</dbReference>
<dbReference type="InterPro" id="IPR002048">
    <property type="entry name" value="EF_hand_dom"/>
</dbReference>
<dbReference type="InterPro" id="IPR028846">
    <property type="entry name" value="Recoverin"/>
</dbReference>
<dbReference type="PANTHER" id="PTHR23055">
    <property type="entry name" value="CALCIUM BINDING PROTEINS"/>
    <property type="match status" value="1"/>
</dbReference>
<dbReference type="PANTHER" id="PTHR23055:SF87">
    <property type="entry name" value="NEUROCALCIN-DELTA"/>
    <property type="match status" value="1"/>
</dbReference>
<dbReference type="Pfam" id="PF00036">
    <property type="entry name" value="EF-hand_1"/>
    <property type="match status" value="1"/>
</dbReference>
<dbReference type="Pfam" id="PF13499">
    <property type="entry name" value="EF-hand_7"/>
    <property type="match status" value="1"/>
</dbReference>
<dbReference type="PRINTS" id="PR00450">
    <property type="entry name" value="RECOVERIN"/>
</dbReference>
<dbReference type="SMART" id="SM00054">
    <property type="entry name" value="EFh"/>
    <property type="match status" value="3"/>
</dbReference>
<dbReference type="SUPFAM" id="SSF47473">
    <property type="entry name" value="EF-hand"/>
    <property type="match status" value="1"/>
</dbReference>
<dbReference type="PROSITE" id="PS00018">
    <property type="entry name" value="EF_HAND_1"/>
    <property type="match status" value="3"/>
</dbReference>
<dbReference type="PROSITE" id="PS50222">
    <property type="entry name" value="EF_HAND_2"/>
    <property type="match status" value="4"/>
</dbReference>